<dbReference type="EMBL" id="CP000885">
    <property type="protein sequence ID" value="ABX40695.1"/>
    <property type="molecule type" value="Genomic_DNA"/>
</dbReference>
<dbReference type="RefSeq" id="WP_012198338.1">
    <property type="nucleotide sequence ID" value="NC_010001.1"/>
</dbReference>
<dbReference type="SMR" id="A9KSQ1"/>
<dbReference type="STRING" id="357809.Cphy_0308"/>
<dbReference type="KEGG" id="cpy:Cphy_0308"/>
<dbReference type="eggNOG" id="COG1699">
    <property type="taxonomic scope" value="Bacteria"/>
</dbReference>
<dbReference type="HOGENOM" id="CLU_112356_0_0_9"/>
<dbReference type="OrthoDB" id="9801235at2"/>
<dbReference type="Proteomes" id="UP000000370">
    <property type="component" value="Chromosome"/>
</dbReference>
<dbReference type="GO" id="GO:0005737">
    <property type="term" value="C:cytoplasm"/>
    <property type="evidence" value="ECO:0007669"/>
    <property type="project" value="UniProtKB-SubCell"/>
</dbReference>
<dbReference type="GO" id="GO:0044780">
    <property type="term" value="P:bacterial-type flagellum assembly"/>
    <property type="evidence" value="ECO:0007669"/>
    <property type="project" value="UniProtKB-UniRule"/>
</dbReference>
<dbReference type="GO" id="GO:0006417">
    <property type="term" value="P:regulation of translation"/>
    <property type="evidence" value="ECO:0007669"/>
    <property type="project" value="UniProtKB-KW"/>
</dbReference>
<dbReference type="Gene3D" id="2.30.290.10">
    <property type="entry name" value="BH3618-like"/>
    <property type="match status" value="1"/>
</dbReference>
<dbReference type="HAMAP" id="MF_01185">
    <property type="entry name" value="FliW"/>
    <property type="match status" value="1"/>
</dbReference>
<dbReference type="InterPro" id="IPR003775">
    <property type="entry name" value="Flagellar_assembly_factor_FliW"/>
</dbReference>
<dbReference type="InterPro" id="IPR024046">
    <property type="entry name" value="Flagellar_assmbl_FliW_dom_sf"/>
</dbReference>
<dbReference type="PANTHER" id="PTHR39190">
    <property type="entry name" value="FLAGELLAR ASSEMBLY FACTOR FLIW"/>
    <property type="match status" value="1"/>
</dbReference>
<dbReference type="PANTHER" id="PTHR39190:SF1">
    <property type="entry name" value="FLAGELLAR ASSEMBLY FACTOR FLIW"/>
    <property type="match status" value="1"/>
</dbReference>
<dbReference type="Pfam" id="PF02623">
    <property type="entry name" value="FliW"/>
    <property type="match status" value="1"/>
</dbReference>
<dbReference type="SUPFAM" id="SSF141457">
    <property type="entry name" value="BH3618-like"/>
    <property type="match status" value="1"/>
</dbReference>
<keyword id="KW-1005">Bacterial flagellum biogenesis</keyword>
<keyword id="KW-0143">Chaperone</keyword>
<keyword id="KW-0963">Cytoplasm</keyword>
<keyword id="KW-1185">Reference proteome</keyword>
<keyword id="KW-0810">Translation regulation</keyword>
<accession>A9KSQ1</accession>
<protein>
    <recommendedName>
        <fullName evidence="1">Flagellar assembly factor FliW</fullName>
    </recommendedName>
</protein>
<evidence type="ECO:0000255" key="1">
    <source>
        <dbReference type="HAMAP-Rule" id="MF_01185"/>
    </source>
</evidence>
<proteinExistence type="inferred from homology"/>
<feature type="chain" id="PRO_1000138258" description="Flagellar assembly factor FliW">
    <location>
        <begin position="1"/>
        <end position="156"/>
    </location>
</feature>
<comment type="function">
    <text evidence="1">Acts as an anti-CsrA protein, binds CsrA and prevents it from repressing translation of its target genes, one of which is flagellin. Binds to flagellin and participates in the assembly of the flagellum.</text>
</comment>
<comment type="subunit">
    <text evidence="1">Interacts with translational regulator CsrA and flagellin(s).</text>
</comment>
<comment type="subcellular location">
    <subcellularLocation>
        <location evidence="1">Cytoplasm</location>
    </subcellularLocation>
</comment>
<comment type="similarity">
    <text evidence="1">Belongs to the FliW family.</text>
</comment>
<reference key="1">
    <citation type="submission" date="2007-11" db="EMBL/GenBank/DDBJ databases">
        <title>Complete genome sequence of Clostridium phytofermentans ISDg.</title>
        <authorList>
            <person name="Leschine S.B."/>
            <person name="Warnick T.A."/>
            <person name="Blanchard J.L."/>
            <person name="Schnell D.J."/>
            <person name="Petit E.L."/>
            <person name="LaTouf W.G."/>
            <person name="Copeland A."/>
            <person name="Lucas S."/>
            <person name="Lapidus A."/>
            <person name="Barry K."/>
            <person name="Glavina del Rio T."/>
            <person name="Dalin E."/>
            <person name="Tice H."/>
            <person name="Pitluck S."/>
            <person name="Kiss H."/>
            <person name="Brettin T."/>
            <person name="Bruce D."/>
            <person name="Detter J.C."/>
            <person name="Han C."/>
            <person name="Kuske C."/>
            <person name="Schmutz J."/>
            <person name="Larimer F."/>
            <person name="Land M."/>
            <person name="Hauser L."/>
            <person name="Kyrpides N."/>
            <person name="Kim E.A."/>
            <person name="Richardson P."/>
        </authorList>
    </citation>
    <scope>NUCLEOTIDE SEQUENCE [LARGE SCALE GENOMIC DNA]</scope>
    <source>
        <strain>ATCC 700394 / DSM 18823 / ISDg</strain>
    </source>
</reference>
<organism>
    <name type="scientific">Lachnoclostridium phytofermentans (strain ATCC 700394 / DSM 18823 / ISDg)</name>
    <name type="common">Clostridium phytofermentans</name>
    <dbReference type="NCBI Taxonomy" id="357809"/>
    <lineage>
        <taxon>Bacteria</taxon>
        <taxon>Bacillati</taxon>
        <taxon>Bacillota</taxon>
        <taxon>Clostridia</taxon>
        <taxon>Lachnospirales</taxon>
        <taxon>Lachnospiraceae</taxon>
    </lineage>
</organism>
<name>FLIW_LACP7</name>
<sequence>MVIATKHFGEIELEEDKILTFDHGIFGFEDCKRYTILYDGEDENSSVISWLQSLDEVSLALPIIQPSHVIDQYNPVIEDELLVSLGDIKEENIVVFLTLTVPSDLTKMTTNLKAPFIINTANKKGCQVVVEDPMFVVKYPVYEKFQNRAKKEDGEC</sequence>
<gene>
    <name evidence="1" type="primary">fliW</name>
    <name type="ordered locus">Cphy_0308</name>
</gene>